<evidence type="ECO:0000250" key="1">
    <source>
        <dbReference type="UniProtKB" id="G3UZ78"/>
    </source>
</evidence>
<evidence type="ECO:0000255" key="2"/>
<evidence type="ECO:0000255" key="3">
    <source>
        <dbReference type="PROSITE-ProRule" id="PRU00116"/>
    </source>
</evidence>
<evidence type="ECO:0000255" key="4">
    <source>
        <dbReference type="PROSITE-ProRule" id="PRU00239"/>
    </source>
</evidence>
<evidence type="ECO:0000255" key="5">
    <source>
        <dbReference type="PROSITE-ProRule" id="PRU01386"/>
    </source>
</evidence>
<evidence type="ECO:0000256" key="6">
    <source>
        <dbReference type="SAM" id="MobiDB-lite"/>
    </source>
</evidence>
<evidence type="ECO:0000269" key="7">
    <source>
    </source>
</evidence>
<evidence type="ECO:0000269" key="8">
    <source>
    </source>
</evidence>
<evidence type="ECO:0000269" key="9">
    <source>
    </source>
</evidence>
<evidence type="ECO:0000269" key="10">
    <source>
    </source>
</evidence>
<evidence type="ECO:0000303" key="11">
    <source>
    </source>
</evidence>
<evidence type="ECO:0000303" key="12">
    <source ref="4"/>
</evidence>
<evidence type="ECO:0000305" key="13"/>
<evidence type="ECO:0000305" key="14">
    <source>
    </source>
</evidence>
<evidence type="ECO:0000312" key="15">
    <source>
        <dbReference type="HGNC" id="HGNC:21212"/>
    </source>
</evidence>
<sequence length="1667" mass="189713">MASKQTKKKEVHRINSAHGSDKSKDFYPFGSNVQSGSTEQKKGKFPLWPEWSEADINSEKWDAGKGAKEKDKTGKSPVFHFFEDPEGKIELPPSLKIYSWKRPQDILFSQTPVVVKNEITFDLFSANEHLLCSELMRWIISEIYAVWKIFNGGILSNYFKGTSGEPPLLPWKPWEHIYSLCKAVKGHMPLFNSYGKYVVKLYWMGCWRKITIDDFLPFDEDNNLLLPATTYEFELWPMLLSKAIIKLANIDIHVADRRELGEFTVIHALTGWLPEVISLHPGYMDKVWELLKEILPEFKLSDEASSESKIAVLDSKLKEPGKEGKEGKEIKDGKEVKDVKEFKPESSLTTLKAPEKSDKVPKEKADARDIGKKRSKDGEKEKFKFSLHGSRPSSEVQYSVQSLSDCSSAIQTSHMVVYATFTPLYLFENKIFSLEKMADSAEKLREYGLSHICSHPVLVTRSRSCPLVAPPKPPPLPPWKLIRQKKETVITDEAQELIVKKPERFLEISSPFLNYRMTPFTIPTEMHFVRSLIKKGIPPGSDLPSVSETDETATHSQTDLSQITKATSQGNTASQVILGKGTDEQTDFGLGDAHQSDGLNLEREIVSQTTATQEKSQEELPTTNNSVSKEIWLDFEDFCVCFQNIYIFHKPSSYCLNFQKSEFKFSEERVSYYLFVDSLKPIELLVCFSALVRWGEYGALTKDSPPIEPGLLTAETFSWKSLKPGSLVLKIHTYATKATVVRLPVGRHMLLFNAYSPVGHSIHICSMVSFVIGDEHVVLPNFEPESCRFTEQSLLIMKAIGNVIANFKDKGKLSAALKDLQTAHYPVPFHDKELTAQHFRVFHLSLWRLMKKVQITKPPPNFKFAFRAMVLDLELLNSSLEEVSLVEWLDVKYCMPTSDKEYSAEEVAAAIKIQAMWRGTYVRLLMKARIPDTKENISVADTLQKVWAVLEMNLEQYAVSLLRLMFKSKCKSLESYPCYQDEETKIAFADYTVTYQEQPPNSWFIVFRETFLVHQDMILVPKVYTTLPICILHIVNNDTMEQVPKVFQKVVPYLYTKNKKGYTFVAEAFTGDTYVAASRWKLRLIGSSAPLPCLSRDSPCNSFAIKEIRDYYIPNDKKILFRYSVKVLTPQPATIQVRTSKPDAFIKLQVLENEETMVSSTGKGQAIIPAFHFLKSEKGLSSQSSKHILSFHSASKKEQEVYVKKKAAQGIQKSPKGRAVSAIQDIGLPLVEEETTSTPTREDSSSTPLQNYKYIIQCSVLYNSWPLTESQLTFVQALKDLKKSNTKAYGERHEELINLGSPDSHTISEGQKSSVTSKTTRKGKEKSSEKEKTAKEKQAPRFEPQISTVHPQQEDPNKPYWILRLVTEHNESELFEVKKDTERADEIRAMKQAWETTEPGRAIKASQARLHYLSGFIKKTSDAESPPISESQTKPKEEVETAARGVKEPNSKNSAGSESKEMTQTGSGSAVWKKWQLTKGLRDVAKSTSSESGGVSSPGKEEREQSTRKENIQTGPRTRSPTILETSPRLIRKALEFMDLSQYVRKTDTDPLLQTDELNQQQAMQKAEEIHQFRQHRTRVLSIRNIDQEERLKLKDEVLDMYKEMQDSLDEARQKIFDIREEYRNKLLEAEHLKLETLAAQEAAMKLETEKMTPAPDTQKKKKGKKK</sequence>
<feature type="chain" id="PRO_0000232525" description="Androglobin">
    <location>
        <begin position="1"/>
        <end position="1667"/>
    </location>
</feature>
<feature type="domain" description="Calpain catalytic" evidence="4">
    <location>
        <begin position="70"/>
        <end position="411"/>
    </location>
</feature>
<feature type="domain" description="Globin; C-terminal part" evidence="5">
    <location>
        <begin position="763"/>
        <end position="890"/>
    </location>
</feature>
<feature type="domain" description="IQ" evidence="3">
    <location>
        <begin position="906"/>
        <end position="935"/>
    </location>
</feature>
<feature type="domain" description="Globin; N-terminal part" evidence="5">
    <location>
        <begin position="936"/>
        <end position="968"/>
    </location>
</feature>
<feature type="region of interest" description="Disordered" evidence="6">
    <location>
        <begin position="1"/>
        <end position="45"/>
    </location>
</feature>
<feature type="region of interest" description="Disordered" evidence="6">
    <location>
        <begin position="347"/>
        <end position="387"/>
    </location>
</feature>
<feature type="region of interest" description="Disordered" evidence="6">
    <location>
        <begin position="540"/>
        <end position="566"/>
    </location>
</feature>
<feature type="region of interest" description="Disordered" evidence="6">
    <location>
        <begin position="1297"/>
        <end position="1355"/>
    </location>
</feature>
<feature type="region of interest" description="Disordered" evidence="6">
    <location>
        <begin position="1420"/>
        <end position="1522"/>
    </location>
</feature>
<feature type="region of interest" description="Disordered" evidence="6">
    <location>
        <begin position="1646"/>
        <end position="1667"/>
    </location>
</feature>
<feature type="coiled-coil region" evidence="2">
    <location>
        <begin position="1588"/>
        <end position="1629"/>
    </location>
</feature>
<feature type="compositionally biased region" description="Basic residues" evidence="6">
    <location>
        <begin position="1"/>
        <end position="11"/>
    </location>
</feature>
<feature type="compositionally biased region" description="Basic and acidic residues" evidence="6">
    <location>
        <begin position="353"/>
        <end position="384"/>
    </location>
</feature>
<feature type="compositionally biased region" description="Polar residues" evidence="6">
    <location>
        <begin position="554"/>
        <end position="566"/>
    </location>
</feature>
<feature type="compositionally biased region" description="Polar residues" evidence="6">
    <location>
        <begin position="1301"/>
        <end position="1315"/>
    </location>
</feature>
<feature type="compositionally biased region" description="Basic and acidic residues" evidence="6">
    <location>
        <begin position="1325"/>
        <end position="1340"/>
    </location>
</feature>
<feature type="compositionally biased region" description="Basic and acidic residues" evidence="6">
    <location>
        <begin position="1433"/>
        <end position="1450"/>
    </location>
</feature>
<feature type="compositionally biased region" description="Polar residues" evidence="6">
    <location>
        <begin position="1451"/>
        <end position="1468"/>
    </location>
</feature>
<feature type="compositionally biased region" description="Low complexity" evidence="6">
    <location>
        <begin position="1487"/>
        <end position="1498"/>
    </location>
</feature>
<feature type="compositionally biased region" description="Basic and acidic residues" evidence="6">
    <location>
        <begin position="1499"/>
        <end position="1511"/>
    </location>
</feature>
<feature type="compositionally biased region" description="Polar residues" evidence="6">
    <location>
        <begin position="1512"/>
        <end position="1522"/>
    </location>
</feature>
<feature type="binding site" description="distal binding residue" evidence="5 9">
    <location>
        <position position="792"/>
    </location>
    <ligand>
        <name>heme b</name>
        <dbReference type="ChEBI" id="CHEBI:60344"/>
    </ligand>
    <ligandPart>
        <name>Fe</name>
        <dbReference type="ChEBI" id="CHEBI:18248"/>
    </ligandPart>
</feature>
<feature type="binding site" description="proximal binding residue" evidence="5 9">
    <location>
        <position position="824"/>
    </location>
    <ligand>
        <name>heme b</name>
        <dbReference type="ChEBI" id="CHEBI:60344"/>
    </ligand>
    <ligandPart>
        <name>Fe</name>
        <dbReference type="ChEBI" id="CHEBI:18248"/>
    </ligandPart>
</feature>
<feature type="splice variant" id="VSP_039243" description="In isoform 2." evidence="13">
    <location>
        <begin position="1"/>
        <end position="951"/>
    </location>
</feature>
<feature type="splice variant" id="VSP_039244" description="In isoform 2." evidence="13">
    <location>
        <begin position="1185"/>
        <end position="1288"/>
    </location>
</feature>
<feature type="sequence variant" id="VAR_025948" description="In dbSNP:rs9497606." evidence="8">
    <original>I</original>
    <variation>T</variation>
    <location>
        <position position="310"/>
    </location>
</feature>
<feature type="sequence variant" id="VAR_088651" description="Found in a patient with asthenozoospermia; likely pathogenic; no effect on interaction with calmodulin." evidence="10">
    <location>
        <begin position="1107"/>
        <end position="1667"/>
    </location>
</feature>
<feature type="sequence variant" id="VAR_063158" description="In dbSNP:rs1052445." evidence="7">
    <original>T</original>
    <variation>A</variation>
    <location>
        <position position="1637"/>
    </location>
</feature>
<feature type="sequence conflict" description="In Ref. 1; AL832192." evidence="13" ref="1">
    <location>
        <begin position="205"/>
        <end position="280"/>
    </location>
</feature>
<feature type="sequence conflict" description="In Ref. 1; AL832192." evidence="13" ref="1">
    <location>
        <begin position="570"/>
        <end position="580"/>
    </location>
</feature>
<feature type="sequence conflict" description="In Ref. 4; DN831198." evidence="13" ref="4">
    <original>T</original>
    <variation>R</variation>
    <location>
        <position position="716"/>
    </location>
</feature>
<feature type="sequence conflict" description="In Ref. 3; BAC05106." evidence="13" ref="3">
    <original>RHMLLFNA</original>
    <variation>YEVASFFP</variation>
    <location>
        <begin position="747"/>
        <end position="754"/>
    </location>
</feature>
<feature type="sequence conflict" description="In Ref. 1; AL832192." evidence="13" ref="1">
    <original>K</original>
    <variation>M</variation>
    <location>
        <position position="810"/>
    </location>
</feature>
<feature type="sequence conflict" description="In Ref. 4; DN831198." evidence="13" ref="4">
    <original>P</original>
    <variation>R</variation>
    <location>
        <position position="931"/>
    </location>
</feature>
<feature type="sequence conflict" description="In Ref. 4; DN831198." evidence="13" ref="4">
    <original>Q</original>
    <variation>L</variation>
    <location>
        <position position="944"/>
    </location>
</feature>
<feature type="sequence conflict" description="In Ref. 2; CAI14697/CAI20489." evidence="13" ref="2">
    <original>A</original>
    <variation>S</variation>
    <location>
        <position position="1639"/>
    </location>
</feature>
<gene>
    <name evidence="12 15" type="primary">ADGB</name>
    <name evidence="15" type="synonym">C6orf103</name>
</gene>
<keyword id="KW-0025">Alternative splicing</keyword>
<keyword id="KW-0966">Cell projection</keyword>
<keyword id="KW-0969">Cilium</keyword>
<keyword id="KW-0175">Coiled coil</keyword>
<keyword id="KW-0221">Differentiation</keyword>
<keyword id="KW-0282">Flagellum</keyword>
<keyword id="KW-0349">Heme</keyword>
<keyword id="KW-0408">Iron</keyword>
<keyword id="KW-0479">Metal-binding</keyword>
<keyword id="KW-1267">Proteomics identification</keyword>
<keyword id="KW-1185">Reference proteome</keyword>
<keyword id="KW-0744">Spermatogenesis</keyword>
<protein>
    <recommendedName>
        <fullName evidence="11">Androglobin</fullName>
    </recommendedName>
</protein>
<comment type="function">
    <text evidence="9 10">Probable chimeric globin with a bis-histidyl six-coordinate heme-iron atom through which it could bind dioxygen, carbon monoxide and nitric oxide (PubMed:22115833). Required for sperm flagellum formation and maturation of elongating spermatids, thus playing an essential role in male fertility (PubMed:36995441).</text>
</comment>
<comment type="subunit">
    <text evidence="1 10">Interacts with septin SEPT10; contributes to in vitro proteolytic cleavage of SEPT10 in a calmodulin-dependent manner. Interacts with CFAP69. Interacts with SPEF2 (By similarity). May interact with calmodulin (PubMed:36995441).</text>
</comment>
<comment type="subcellular location">
    <subcellularLocation>
        <location evidence="1">Cell projection</location>
        <location evidence="1">Cilium</location>
        <location evidence="1">Flagellum</location>
    </subcellularLocation>
    <text evidence="1">Expressed within the midpiece and along the whole sperm flagellum. Detected in the annulus of the sperm flagellum in S12 and S15 spermatids and mature sperm.</text>
</comment>
<comment type="alternative products">
    <event type="alternative splicing"/>
    <isoform>
        <id>Q8N7X0-1</id>
        <name>1</name>
        <sequence type="displayed"/>
    </isoform>
    <isoform>
        <id>Q8N7X0-2</id>
        <name>2</name>
        <sequence type="described" ref="VSP_039243 VSP_039244"/>
    </isoform>
</comment>
<comment type="domain">
    <text evidence="5 9">The globin domain is circularly permuted. The globin domain, which normally consists of eight consecutive alpha-helices from A (N-terminal) to H (C-terminal), is circularly permutated and split into two parts. The part containing helices A and B is shifted C-terminally and is separated from the main globin sequence (helices C-H) by a potential calmodulin-binding IQ domain.</text>
</comment>
<comment type="disease">
    <text evidence="10">Defects in ADGB may be the cause of asthenozoospermia, a condition in which the percentage of progressively motile sperm is abnormally low.</text>
</comment>
<comment type="similarity">
    <text evidence="14">In the central section; belongs to the globin family.</text>
</comment>
<comment type="similarity">
    <text evidence="14">In the N-terminal section; belongs to the peptidase C2 family.</text>
</comment>
<comment type="caution">
    <text evidence="14">The calpain domain lacks the conserved active site residues. Probably catalytically inactive as a calcium-dependent cysteine-type endopeptidase.</text>
</comment>
<comment type="sequence caution" evidence="13">
    <conflict type="frameshift">
        <sequence resource="EMBL" id="AL832192"/>
    </conflict>
</comment>
<comment type="sequence caution" evidence="13">
    <conflict type="miscellaneous discrepancy">
        <sequence resource="EMBL" id="AL832192"/>
    </conflict>
    <text>Intron retention.</text>
</comment>
<comment type="sequence caution" evidence="13">
    <conflict type="erroneous gene model prediction">
        <sequence resource="EMBL-CDS" id="CAI16490"/>
    </conflict>
</comment>
<comment type="sequence caution" evidence="13">
    <conflict type="erroneous gene model prediction">
        <sequence resource="EMBL-CDS" id="CAI20488"/>
    </conflict>
</comment>
<comment type="sequence caution" evidence="13">
    <conflict type="frameshift">
        <sequence resource="EMBL" id="DN831198"/>
    </conflict>
</comment>
<proteinExistence type="evidence at protein level"/>
<reference key="1">
    <citation type="journal article" date="2007" name="BMC Genomics">
        <title>The full-ORF clone resource of the German cDNA consortium.</title>
        <authorList>
            <person name="Bechtel S."/>
            <person name="Rosenfelder H."/>
            <person name="Duda A."/>
            <person name="Schmidt C.P."/>
            <person name="Ernst U."/>
            <person name="Wellenreuther R."/>
            <person name="Mehrle A."/>
            <person name="Schuster C."/>
            <person name="Bahr A."/>
            <person name="Bloecker H."/>
            <person name="Heubner D."/>
            <person name="Hoerlein A."/>
            <person name="Michel G."/>
            <person name="Wedler H."/>
            <person name="Koehrer K."/>
            <person name="Ottenwaelder B."/>
            <person name="Poustka A."/>
            <person name="Wiemann S."/>
            <person name="Schupp I."/>
        </authorList>
    </citation>
    <scope>NUCLEOTIDE SEQUENCE [LARGE SCALE MRNA] (ISOFORM 1)</scope>
</reference>
<reference key="2">
    <citation type="journal article" date="2003" name="Nature">
        <title>The DNA sequence and analysis of human chromosome 6.</title>
        <authorList>
            <person name="Mungall A.J."/>
            <person name="Palmer S.A."/>
            <person name="Sims S.K."/>
            <person name="Edwards C.A."/>
            <person name="Ashurst J.L."/>
            <person name="Wilming L."/>
            <person name="Jones M.C."/>
            <person name="Horton R."/>
            <person name="Hunt S.E."/>
            <person name="Scott C.E."/>
            <person name="Gilbert J.G.R."/>
            <person name="Clamp M.E."/>
            <person name="Bethel G."/>
            <person name="Milne S."/>
            <person name="Ainscough R."/>
            <person name="Almeida J.P."/>
            <person name="Ambrose K.D."/>
            <person name="Andrews T.D."/>
            <person name="Ashwell R.I.S."/>
            <person name="Babbage A.K."/>
            <person name="Bagguley C.L."/>
            <person name="Bailey J."/>
            <person name="Banerjee R."/>
            <person name="Barker D.J."/>
            <person name="Barlow K.F."/>
            <person name="Bates K."/>
            <person name="Beare D.M."/>
            <person name="Beasley H."/>
            <person name="Beasley O."/>
            <person name="Bird C.P."/>
            <person name="Blakey S.E."/>
            <person name="Bray-Allen S."/>
            <person name="Brook J."/>
            <person name="Brown A.J."/>
            <person name="Brown J.Y."/>
            <person name="Burford D.C."/>
            <person name="Burrill W."/>
            <person name="Burton J."/>
            <person name="Carder C."/>
            <person name="Carter N.P."/>
            <person name="Chapman J.C."/>
            <person name="Clark S.Y."/>
            <person name="Clark G."/>
            <person name="Clee C.M."/>
            <person name="Clegg S."/>
            <person name="Cobley V."/>
            <person name="Collier R.E."/>
            <person name="Collins J.E."/>
            <person name="Colman L.K."/>
            <person name="Corby N.R."/>
            <person name="Coville G.J."/>
            <person name="Culley K.M."/>
            <person name="Dhami P."/>
            <person name="Davies J."/>
            <person name="Dunn M."/>
            <person name="Earthrowl M.E."/>
            <person name="Ellington A.E."/>
            <person name="Evans K.A."/>
            <person name="Faulkner L."/>
            <person name="Francis M.D."/>
            <person name="Frankish A."/>
            <person name="Frankland J."/>
            <person name="French L."/>
            <person name="Garner P."/>
            <person name="Garnett J."/>
            <person name="Ghori M.J."/>
            <person name="Gilby L.M."/>
            <person name="Gillson C.J."/>
            <person name="Glithero R.J."/>
            <person name="Grafham D.V."/>
            <person name="Grant M."/>
            <person name="Gribble S."/>
            <person name="Griffiths C."/>
            <person name="Griffiths M.N.D."/>
            <person name="Hall R."/>
            <person name="Halls K.S."/>
            <person name="Hammond S."/>
            <person name="Harley J.L."/>
            <person name="Hart E.A."/>
            <person name="Heath P.D."/>
            <person name="Heathcott R."/>
            <person name="Holmes S.J."/>
            <person name="Howden P.J."/>
            <person name="Howe K.L."/>
            <person name="Howell G.R."/>
            <person name="Huckle E."/>
            <person name="Humphray S.J."/>
            <person name="Humphries M.D."/>
            <person name="Hunt A.R."/>
            <person name="Johnson C.M."/>
            <person name="Joy A.A."/>
            <person name="Kay M."/>
            <person name="Keenan S.J."/>
            <person name="Kimberley A.M."/>
            <person name="King A."/>
            <person name="Laird G.K."/>
            <person name="Langford C."/>
            <person name="Lawlor S."/>
            <person name="Leongamornlert D.A."/>
            <person name="Leversha M."/>
            <person name="Lloyd C.R."/>
            <person name="Lloyd D.M."/>
            <person name="Loveland J.E."/>
            <person name="Lovell J."/>
            <person name="Martin S."/>
            <person name="Mashreghi-Mohammadi M."/>
            <person name="Maslen G.L."/>
            <person name="Matthews L."/>
            <person name="McCann O.T."/>
            <person name="McLaren S.J."/>
            <person name="McLay K."/>
            <person name="McMurray A."/>
            <person name="Moore M.J.F."/>
            <person name="Mullikin J.C."/>
            <person name="Niblett D."/>
            <person name="Nickerson T."/>
            <person name="Novik K.L."/>
            <person name="Oliver K."/>
            <person name="Overton-Larty E.K."/>
            <person name="Parker A."/>
            <person name="Patel R."/>
            <person name="Pearce A.V."/>
            <person name="Peck A.I."/>
            <person name="Phillimore B.J.C.T."/>
            <person name="Phillips S."/>
            <person name="Plumb R.W."/>
            <person name="Porter K.M."/>
            <person name="Ramsey Y."/>
            <person name="Ranby S.A."/>
            <person name="Rice C.M."/>
            <person name="Ross M.T."/>
            <person name="Searle S.M."/>
            <person name="Sehra H.K."/>
            <person name="Sheridan E."/>
            <person name="Skuce C.D."/>
            <person name="Smith S."/>
            <person name="Smith M."/>
            <person name="Spraggon L."/>
            <person name="Squares S.L."/>
            <person name="Steward C.A."/>
            <person name="Sycamore N."/>
            <person name="Tamlyn-Hall G."/>
            <person name="Tester J."/>
            <person name="Theaker A.J."/>
            <person name="Thomas D.W."/>
            <person name="Thorpe A."/>
            <person name="Tracey A."/>
            <person name="Tromans A."/>
            <person name="Tubby B."/>
            <person name="Wall M."/>
            <person name="Wallis J.M."/>
            <person name="West A.P."/>
            <person name="White S.S."/>
            <person name="Whitehead S.L."/>
            <person name="Whittaker H."/>
            <person name="Wild A."/>
            <person name="Willey D.J."/>
            <person name="Wilmer T.E."/>
            <person name="Wood J.M."/>
            <person name="Wray P.W."/>
            <person name="Wyatt J.C."/>
            <person name="Young L."/>
            <person name="Younger R.M."/>
            <person name="Bentley D.R."/>
            <person name="Coulson A."/>
            <person name="Durbin R.M."/>
            <person name="Hubbard T."/>
            <person name="Sulston J.E."/>
            <person name="Dunham I."/>
            <person name="Rogers J."/>
            <person name="Beck S."/>
        </authorList>
    </citation>
    <scope>NUCLEOTIDE SEQUENCE [LARGE SCALE GENOMIC DNA]</scope>
    <scope>VARIANT ALA-1637</scope>
</reference>
<reference key="3">
    <citation type="journal article" date="2004" name="Nat. Genet.">
        <title>Complete sequencing and characterization of 21,243 full-length human cDNAs.</title>
        <authorList>
            <person name="Ota T."/>
            <person name="Suzuki Y."/>
            <person name="Nishikawa T."/>
            <person name="Otsuki T."/>
            <person name="Sugiyama T."/>
            <person name="Irie R."/>
            <person name="Wakamatsu A."/>
            <person name="Hayashi K."/>
            <person name="Sato H."/>
            <person name="Nagai K."/>
            <person name="Kimura K."/>
            <person name="Makita H."/>
            <person name="Sekine M."/>
            <person name="Obayashi M."/>
            <person name="Nishi T."/>
            <person name="Shibahara T."/>
            <person name="Tanaka T."/>
            <person name="Ishii S."/>
            <person name="Yamamoto J."/>
            <person name="Saito K."/>
            <person name="Kawai Y."/>
            <person name="Isono Y."/>
            <person name="Nakamura Y."/>
            <person name="Nagahari K."/>
            <person name="Murakami K."/>
            <person name="Yasuda T."/>
            <person name="Iwayanagi T."/>
            <person name="Wagatsuma M."/>
            <person name="Shiratori A."/>
            <person name="Sudo H."/>
            <person name="Hosoiri T."/>
            <person name="Kaku Y."/>
            <person name="Kodaira H."/>
            <person name="Kondo H."/>
            <person name="Sugawara M."/>
            <person name="Takahashi M."/>
            <person name="Kanda K."/>
            <person name="Yokoi T."/>
            <person name="Furuya T."/>
            <person name="Kikkawa E."/>
            <person name="Omura Y."/>
            <person name="Abe K."/>
            <person name="Kamihara K."/>
            <person name="Katsuta N."/>
            <person name="Sato K."/>
            <person name="Tanikawa M."/>
            <person name="Yamazaki M."/>
            <person name="Ninomiya K."/>
            <person name="Ishibashi T."/>
            <person name="Yamashita H."/>
            <person name="Murakawa K."/>
            <person name="Fujimori K."/>
            <person name="Tanai H."/>
            <person name="Kimata M."/>
            <person name="Watanabe M."/>
            <person name="Hiraoka S."/>
            <person name="Chiba Y."/>
            <person name="Ishida S."/>
            <person name="Ono Y."/>
            <person name="Takiguchi S."/>
            <person name="Watanabe S."/>
            <person name="Yosida M."/>
            <person name="Hotuta T."/>
            <person name="Kusano J."/>
            <person name="Kanehori K."/>
            <person name="Takahashi-Fujii A."/>
            <person name="Hara H."/>
            <person name="Tanase T.-O."/>
            <person name="Nomura Y."/>
            <person name="Togiya S."/>
            <person name="Komai F."/>
            <person name="Hara R."/>
            <person name="Takeuchi K."/>
            <person name="Arita M."/>
            <person name="Imose N."/>
            <person name="Musashino K."/>
            <person name="Yuuki H."/>
            <person name="Oshima A."/>
            <person name="Sasaki N."/>
            <person name="Aotsuka S."/>
            <person name="Yoshikawa Y."/>
            <person name="Matsunawa H."/>
            <person name="Ichihara T."/>
            <person name="Shiohata N."/>
            <person name="Sano S."/>
            <person name="Moriya S."/>
            <person name="Momiyama H."/>
            <person name="Satoh N."/>
            <person name="Takami S."/>
            <person name="Terashima Y."/>
            <person name="Suzuki O."/>
            <person name="Nakagawa S."/>
            <person name="Senoh A."/>
            <person name="Mizoguchi H."/>
            <person name="Goto Y."/>
            <person name="Shimizu F."/>
            <person name="Wakebe H."/>
            <person name="Hishigaki H."/>
            <person name="Watanabe T."/>
            <person name="Sugiyama A."/>
            <person name="Takemoto M."/>
            <person name="Kawakami B."/>
            <person name="Yamazaki M."/>
            <person name="Watanabe K."/>
            <person name="Kumagai A."/>
            <person name="Itakura S."/>
            <person name="Fukuzumi Y."/>
            <person name="Fujimori Y."/>
            <person name="Komiyama M."/>
            <person name="Tashiro H."/>
            <person name="Tanigami A."/>
            <person name="Fujiwara T."/>
            <person name="Ono T."/>
            <person name="Yamada K."/>
            <person name="Fujii Y."/>
            <person name="Ozaki K."/>
            <person name="Hirao M."/>
            <person name="Ohmori Y."/>
            <person name="Kawabata A."/>
            <person name="Hikiji T."/>
            <person name="Kobatake N."/>
            <person name="Inagaki H."/>
            <person name="Ikema Y."/>
            <person name="Okamoto S."/>
            <person name="Okitani R."/>
            <person name="Kawakami T."/>
            <person name="Noguchi S."/>
            <person name="Itoh T."/>
            <person name="Shigeta K."/>
            <person name="Senba T."/>
            <person name="Matsumura K."/>
            <person name="Nakajima Y."/>
            <person name="Mizuno T."/>
            <person name="Morinaga M."/>
            <person name="Sasaki M."/>
            <person name="Togashi T."/>
            <person name="Oyama M."/>
            <person name="Hata H."/>
            <person name="Watanabe M."/>
            <person name="Komatsu T."/>
            <person name="Mizushima-Sugano J."/>
            <person name="Satoh T."/>
            <person name="Shirai Y."/>
            <person name="Takahashi Y."/>
            <person name="Nakagawa K."/>
            <person name="Okumura K."/>
            <person name="Nagase T."/>
            <person name="Nomura N."/>
            <person name="Kikuchi H."/>
            <person name="Masuho Y."/>
            <person name="Yamashita R."/>
            <person name="Nakai K."/>
            <person name="Yada T."/>
            <person name="Nakamura Y."/>
            <person name="Ohara O."/>
            <person name="Isogai T."/>
            <person name="Sugano S."/>
        </authorList>
    </citation>
    <scope>NUCLEOTIDE SEQUENCE [LARGE SCALE MRNA] OF 1-754 (ISOFORM 1)</scope>
    <scope>VARIANT THR-310</scope>
    <source>
        <tissue>Testis</tissue>
    </source>
</reference>
<reference key="4">
    <citation type="submission" date="2005-04" db="EMBL/GenBank/DDBJ databases">
        <title>Exhaustive RT-PCR and sequencing of all novel TWINSCAN predictions in human.</title>
        <authorList>
            <person name="Stevens M."/>
            <person name="Wei C."/>
            <person name="Gross S.S."/>
            <person name="McPherson J."/>
            <person name="Brent M.R."/>
        </authorList>
    </citation>
    <scope>NUCLEOTIDE SEQUENCE [LARGE SCALE MRNA] OF 697-964</scope>
</reference>
<reference key="5">
    <citation type="journal article" date="2012" name="Mol. Biol. Evol.">
        <title>Androglobin: a chimeric globin in metazoans that is preferentially expressed in mammalian testes.</title>
        <authorList>
            <person name="Hoogewijs D."/>
            <person name="Ebner B."/>
            <person name="Germani F."/>
            <person name="Hoffmann F.G."/>
            <person name="Fabrizius A."/>
            <person name="Moens L."/>
            <person name="Burmester T."/>
            <person name="Dewilde S."/>
            <person name="Storz J.F."/>
            <person name="Vinogradov S.N."/>
            <person name="Hankeln T."/>
        </authorList>
    </citation>
    <scope>FUNCTION</scope>
    <scope>DOMAIN</scope>
    <scope>CAUTION</scope>
    <scope>HEME-BINDING</scope>
    <scope>REGION</scope>
</reference>
<reference key="6">
    <citation type="journal article" date="2023" name="Hum. Genet.">
        <title>ADGB variants cause asthenozoospermia and male infertility.</title>
        <authorList>
            <person name="Qu R."/>
            <person name="Zhang Z."/>
            <person name="Wu L."/>
            <person name="Li Q."/>
            <person name="Mu J."/>
            <person name="Zhao L."/>
            <person name="Yan Z."/>
            <person name="Wang W."/>
            <person name="Zeng Y."/>
            <person name="Liu R."/>
            <person name="Dong J."/>
            <person name="Li Q."/>
            <person name="Sun X."/>
            <person name="Wang L."/>
            <person name="Sang Q."/>
            <person name="Chen B."/>
            <person name="Kuang Y."/>
        </authorList>
    </citation>
    <scope>INVOLVEMENT IN ASTHENOZOOSPERMIA</scope>
    <scope>VARIANT 1107-GLU--LYS-1667 DEL</scope>
    <scope>FUNCTION</scope>
    <scope>INTERACTION WITH CALMODULIN</scope>
</reference>
<name>ADGB_HUMAN</name>
<organism>
    <name type="scientific">Homo sapiens</name>
    <name type="common">Human</name>
    <dbReference type="NCBI Taxonomy" id="9606"/>
    <lineage>
        <taxon>Eukaryota</taxon>
        <taxon>Metazoa</taxon>
        <taxon>Chordata</taxon>
        <taxon>Craniata</taxon>
        <taxon>Vertebrata</taxon>
        <taxon>Euteleostomi</taxon>
        <taxon>Mammalia</taxon>
        <taxon>Eutheria</taxon>
        <taxon>Euarchontoglires</taxon>
        <taxon>Primates</taxon>
        <taxon>Haplorrhini</taxon>
        <taxon>Catarrhini</taxon>
        <taxon>Hominidae</taxon>
        <taxon>Homo</taxon>
    </lineage>
</organism>
<accession>Q8N7X0</accession>
<accession>Q5T402</accession>
<accession>Q5T904</accession>
<accession>Q5T905</accession>
<dbReference type="EMBL" id="AL832192">
    <property type="status" value="NOT_ANNOTATED_CDS"/>
    <property type="molecule type" value="mRNA"/>
</dbReference>
<dbReference type="EMBL" id="AL138916">
    <property type="protein sequence ID" value="CAI14697.1"/>
    <property type="molecule type" value="Genomic_DNA"/>
</dbReference>
<dbReference type="EMBL" id="AL158199">
    <property type="protein sequence ID" value="CAI14697.1"/>
    <property type="status" value="JOINED"/>
    <property type="molecule type" value="Genomic_DNA"/>
</dbReference>
<dbReference type="EMBL" id="AL138916">
    <property type="protein sequence ID" value="CAI14698.1"/>
    <property type="molecule type" value="Genomic_DNA"/>
</dbReference>
<dbReference type="EMBL" id="AL158199">
    <property type="protein sequence ID" value="CAI14698.1"/>
    <property type="status" value="JOINED"/>
    <property type="molecule type" value="Genomic_DNA"/>
</dbReference>
<dbReference type="EMBL" id="AL158199">
    <property type="protein sequence ID" value="CAI20488.1"/>
    <property type="status" value="ALT_SEQ"/>
    <property type="molecule type" value="Genomic_DNA"/>
</dbReference>
<dbReference type="EMBL" id="AL359547">
    <property type="protein sequence ID" value="CAI20488.1"/>
    <property type="status" value="JOINED"/>
    <property type="molecule type" value="Genomic_DNA"/>
</dbReference>
<dbReference type="EMBL" id="AL158199">
    <property type="protein sequence ID" value="CAI20489.1"/>
    <property type="molecule type" value="Genomic_DNA"/>
</dbReference>
<dbReference type="EMBL" id="AL138916">
    <property type="protein sequence ID" value="CAI20489.1"/>
    <property type="status" value="JOINED"/>
    <property type="molecule type" value="Genomic_DNA"/>
</dbReference>
<dbReference type="EMBL" id="AL158199">
    <property type="protein sequence ID" value="CAI20490.1"/>
    <property type="molecule type" value="Genomic_DNA"/>
</dbReference>
<dbReference type="EMBL" id="AL138916">
    <property type="protein sequence ID" value="CAI20490.1"/>
    <property type="status" value="JOINED"/>
    <property type="molecule type" value="Genomic_DNA"/>
</dbReference>
<dbReference type="EMBL" id="AL359547">
    <property type="protein sequence ID" value="CAI16490.1"/>
    <property type="status" value="ALT_SEQ"/>
    <property type="molecule type" value="Genomic_DNA"/>
</dbReference>
<dbReference type="EMBL" id="AL158199">
    <property type="protein sequence ID" value="CAI16490.1"/>
    <property type="status" value="JOINED"/>
    <property type="molecule type" value="Genomic_DNA"/>
</dbReference>
<dbReference type="EMBL" id="AK097570">
    <property type="protein sequence ID" value="BAC05106.1"/>
    <property type="molecule type" value="mRNA"/>
</dbReference>
<dbReference type="EMBL" id="DN831198">
    <property type="status" value="NOT_ANNOTATED_CDS"/>
    <property type="molecule type" value="mRNA"/>
</dbReference>
<dbReference type="RefSeq" id="NP_078970.3">
    <molecule id="Q8N7X0-1"/>
    <property type="nucleotide sequence ID" value="NM_024694.3"/>
</dbReference>
<dbReference type="SMR" id="Q8N7X0"/>
<dbReference type="BioGRID" id="122859">
    <property type="interactions" value="11"/>
</dbReference>
<dbReference type="FunCoup" id="Q8N7X0">
    <property type="interactions" value="4"/>
</dbReference>
<dbReference type="IntAct" id="Q8N7X0">
    <property type="interactions" value="6"/>
</dbReference>
<dbReference type="STRING" id="9606.ENSP00000381036"/>
<dbReference type="MEROPS" id="C02.972"/>
<dbReference type="iPTMnet" id="Q8N7X0"/>
<dbReference type="PhosphoSitePlus" id="Q8N7X0"/>
<dbReference type="BioMuta" id="ADGB"/>
<dbReference type="DMDM" id="298286920"/>
<dbReference type="jPOST" id="Q8N7X0"/>
<dbReference type="MassIVE" id="Q8N7X0"/>
<dbReference type="PaxDb" id="9606-ENSP00000381036"/>
<dbReference type="PeptideAtlas" id="Q8N7X0"/>
<dbReference type="ProteomicsDB" id="72338">
    <molecule id="Q8N7X0-1"/>
</dbReference>
<dbReference type="ProteomicsDB" id="72339">
    <molecule id="Q8N7X0-2"/>
</dbReference>
<dbReference type="Antibodypedia" id="50988">
    <property type="antibodies" value="16 antibodies from 8 providers"/>
</dbReference>
<dbReference type="DNASU" id="79747"/>
<dbReference type="Ensembl" id="ENST00000397944.8">
    <molecule id="Q8N7X0-1"/>
    <property type="protein sequence ID" value="ENSP00000381036.3"/>
    <property type="gene ID" value="ENSG00000118492.19"/>
</dbReference>
<dbReference type="GeneID" id="79747"/>
<dbReference type="KEGG" id="hsa:79747"/>
<dbReference type="MANE-Select" id="ENST00000397944.8">
    <property type="protein sequence ID" value="ENSP00000381036.3"/>
    <property type="RefSeq nucleotide sequence ID" value="NM_024694.4"/>
    <property type="RefSeq protein sequence ID" value="NP_078970.3"/>
</dbReference>
<dbReference type="UCSC" id="uc010khx.4">
    <molecule id="Q8N7X0-1"/>
    <property type="organism name" value="human"/>
</dbReference>
<dbReference type="AGR" id="HGNC:21212"/>
<dbReference type="CTD" id="79747"/>
<dbReference type="DisGeNET" id="79747"/>
<dbReference type="GeneCards" id="ADGB"/>
<dbReference type="HGNC" id="HGNC:21212">
    <property type="gene designation" value="ADGB"/>
</dbReference>
<dbReference type="HPA" id="ENSG00000118492">
    <property type="expression patterns" value="Tissue enhanced (choroid plexus, fallopian tube, testis)"/>
</dbReference>
<dbReference type="MIM" id="614630">
    <property type="type" value="gene"/>
</dbReference>
<dbReference type="neXtProt" id="NX_Q8N7X0"/>
<dbReference type="OpenTargets" id="ENSG00000118492"/>
<dbReference type="PharmGKB" id="PA134944476"/>
<dbReference type="VEuPathDB" id="HostDB:ENSG00000118492"/>
<dbReference type="eggNOG" id="KOG0045">
    <property type="taxonomic scope" value="Eukaryota"/>
</dbReference>
<dbReference type="GeneTree" id="ENSGT00390000014904"/>
<dbReference type="HOGENOM" id="CLU_003228_0_0_1"/>
<dbReference type="InParanoid" id="Q8N7X0"/>
<dbReference type="OMA" id="DMYKEMR"/>
<dbReference type="OrthoDB" id="9374162at2759"/>
<dbReference type="PAN-GO" id="Q8N7X0">
    <property type="GO annotations" value="0 GO annotations based on evolutionary models"/>
</dbReference>
<dbReference type="PhylomeDB" id="Q8N7X0"/>
<dbReference type="TreeFam" id="TF329120"/>
<dbReference type="PathwayCommons" id="Q8N7X0"/>
<dbReference type="SignaLink" id="Q8N7X0"/>
<dbReference type="BioGRID-ORCS" id="79747">
    <property type="hits" value="3 hits in 306 CRISPR screens"/>
</dbReference>
<dbReference type="ChiTaRS" id="ADGB">
    <property type="organism name" value="human"/>
</dbReference>
<dbReference type="GenomeRNAi" id="79747"/>
<dbReference type="Pharos" id="Q8N7X0">
    <property type="development level" value="Tdark"/>
</dbReference>
<dbReference type="PRO" id="PR:Q8N7X0"/>
<dbReference type="Proteomes" id="UP000005640">
    <property type="component" value="Chromosome 6"/>
</dbReference>
<dbReference type="RNAct" id="Q8N7X0">
    <property type="molecule type" value="protein"/>
</dbReference>
<dbReference type="Bgee" id="ENSG00000118492">
    <property type="expression patterns" value="Expressed in right uterine tube and 94 other cell types or tissues"/>
</dbReference>
<dbReference type="ExpressionAtlas" id="Q8N7X0">
    <property type="expression patterns" value="baseline and differential"/>
</dbReference>
<dbReference type="GO" id="GO:0097227">
    <property type="term" value="C:sperm annulus"/>
    <property type="evidence" value="ECO:0000318"/>
    <property type="project" value="GO_Central"/>
</dbReference>
<dbReference type="GO" id="GO:0097225">
    <property type="term" value="C:sperm midpiece"/>
    <property type="evidence" value="ECO:0000318"/>
    <property type="project" value="GO_Central"/>
</dbReference>
<dbReference type="GO" id="GO:0004198">
    <property type="term" value="F:calcium-dependent cysteine-type endopeptidase activity"/>
    <property type="evidence" value="ECO:0007669"/>
    <property type="project" value="InterPro"/>
</dbReference>
<dbReference type="GO" id="GO:0020037">
    <property type="term" value="F:heme binding"/>
    <property type="evidence" value="ECO:0007669"/>
    <property type="project" value="InterPro"/>
</dbReference>
<dbReference type="GO" id="GO:0046872">
    <property type="term" value="F:metal ion binding"/>
    <property type="evidence" value="ECO:0007669"/>
    <property type="project" value="UniProtKB-KW"/>
</dbReference>
<dbReference type="GO" id="GO:0019825">
    <property type="term" value="F:oxygen binding"/>
    <property type="evidence" value="ECO:0007669"/>
    <property type="project" value="InterPro"/>
</dbReference>
<dbReference type="GO" id="GO:0006508">
    <property type="term" value="P:proteolysis"/>
    <property type="evidence" value="ECO:0007669"/>
    <property type="project" value="InterPro"/>
</dbReference>
<dbReference type="GO" id="GO:0007286">
    <property type="term" value="P:spermatid development"/>
    <property type="evidence" value="ECO:0000318"/>
    <property type="project" value="GO_Central"/>
</dbReference>
<dbReference type="CDD" id="cd22307">
    <property type="entry name" value="Adgb_C_mid-like"/>
    <property type="match status" value="1"/>
</dbReference>
<dbReference type="Gene3D" id="1.10.490.10">
    <property type="entry name" value="Globins"/>
    <property type="match status" value="1"/>
</dbReference>
<dbReference type="InterPro" id="IPR053033">
    <property type="entry name" value="Androglobin-like"/>
</dbReference>
<dbReference type="InterPro" id="IPR054093">
    <property type="entry name" value="Androglobin_II"/>
</dbReference>
<dbReference type="InterPro" id="IPR054094">
    <property type="entry name" value="Androglobin_IV"/>
</dbReference>
<dbReference type="InterPro" id="IPR054095">
    <property type="entry name" value="Androglobin_V"/>
</dbReference>
<dbReference type="InterPro" id="IPR012292">
    <property type="entry name" value="Globin/Proto"/>
</dbReference>
<dbReference type="InterPro" id="IPR038765">
    <property type="entry name" value="Papain-like_cys_pep_sf"/>
</dbReference>
<dbReference type="InterPro" id="IPR001300">
    <property type="entry name" value="Peptidase_C2_calpain_cat"/>
</dbReference>
<dbReference type="PANTHER" id="PTHR46298">
    <property type="entry name" value="ANDROGLOBIN"/>
    <property type="match status" value="1"/>
</dbReference>
<dbReference type="PANTHER" id="PTHR46298:SF1">
    <property type="entry name" value="ANDROGLOBIN"/>
    <property type="match status" value="1"/>
</dbReference>
<dbReference type="Pfam" id="PF22068">
    <property type="entry name" value="Androglobin_II"/>
    <property type="match status" value="1"/>
</dbReference>
<dbReference type="Pfam" id="PF22069">
    <property type="entry name" value="Androglobin_IV"/>
    <property type="match status" value="1"/>
</dbReference>
<dbReference type="Pfam" id="PF22070">
    <property type="entry name" value="Androglobin_V"/>
    <property type="match status" value="1"/>
</dbReference>
<dbReference type="Pfam" id="PF00648">
    <property type="entry name" value="Peptidase_C2"/>
    <property type="match status" value="1"/>
</dbReference>
<dbReference type="SMART" id="SM00230">
    <property type="entry name" value="CysPc"/>
    <property type="match status" value="1"/>
</dbReference>
<dbReference type="SUPFAM" id="SSF54001">
    <property type="entry name" value="Cysteine proteinases"/>
    <property type="match status" value="1"/>
</dbReference>
<dbReference type="PROSITE" id="PS50203">
    <property type="entry name" value="CALPAIN_CAT"/>
    <property type="match status" value="1"/>
</dbReference>
<dbReference type="PROSITE" id="PS52042">
    <property type="entry name" value="GLOBIN_CP_ADGB"/>
    <property type="match status" value="1"/>
</dbReference>
<dbReference type="PROSITE" id="PS50096">
    <property type="entry name" value="IQ"/>
    <property type="match status" value="1"/>
</dbReference>